<accession>P0C860</accession>
<accession>B4DWW7</accession>
<name>MS3L2_HUMAN</name>
<comment type="function">
    <text evidence="1">Probable non-catalytic component of the MSL histone acetyltransferase complex, a multiprotein complex that mediates the majority of histone H4 acetylation at 'Lys-16' (H4K16ac), an epigenetic mark that prevents chromatin compaction.</text>
</comment>
<comment type="subcellular location">
    <subcellularLocation>
        <location evidence="2">Nucleus</location>
    </subcellularLocation>
</comment>
<proteinExistence type="evidence at protein level"/>
<reference key="1">
    <citation type="journal article" date="2005" name="Nature">
        <title>Generation and annotation of the DNA sequences of human chromosomes 2 and 4.</title>
        <authorList>
            <person name="Hillier L.W."/>
            <person name="Graves T.A."/>
            <person name="Fulton R.S."/>
            <person name="Fulton L.A."/>
            <person name="Pepin K.H."/>
            <person name="Minx P."/>
            <person name="Wagner-McPherson C."/>
            <person name="Layman D."/>
            <person name="Wylie K."/>
            <person name="Sekhon M."/>
            <person name="Becker M.C."/>
            <person name="Fewell G.A."/>
            <person name="Delehaunty K.D."/>
            <person name="Miner T.L."/>
            <person name="Nash W.E."/>
            <person name="Kremitzki C."/>
            <person name="Oddy L."/>
            <person name="Du H."/>
            <person name="Sun H."/>
            <person name="Bradshaw-Cordum H."/>
            <person name="Ali J."/>
            <person name="Carter J."/>
            <person name="Cordes M."/>
            <person name="Harris A."/>
            <person name="Isak A."/>
            <person name="van Brunt A."/>
            <person name="Nguyen C."/>
            <person name="Du F."/>
            <person name="Courtney L."/>
            <person name="Kalicki J."/>
            <person name="Ozersky P."/>
            <person name="Abbott S."/>
            <person name="Armstrong J."/>
            <person name="Belter E.A."/>
            <person name="Caruso L."/>
            <person name="Cedroni M."/>
            <person name="Cotton M."/>
            <person name="Davidson T."/>
            <person name="Desai A."/>
            <person name="Elliott G."/>
            <person name="Erb T."/>
            <person name="Fronick C."/>
            <person name="Gaige T."/>
            <person name="Haakenson W."/>
            <person name="Haglund K."/>
            <person name="Holmes A."/>
            <person name="Harkins R."/>
            <person name="Kim K."/>
            <person name="Kruchowski S.S."/>
            <person name="Strong C.M."/>
            <person name="Grewal N."/>
            <person name="Goyea E."/>
            <person name="Hou S."/>
            <person name="Levy A."/>
            <person name="Martinka S."/>
            <person name="Mead K."/>
            <person name="McLellan M.D."/>
            <person name="Meyer R."/>
            <person name="Randall-Maher J."/>
            <person name="Tomlinson C."/>
            <person name="Dauphin-Kohlberg S."/>
            <person name="Kozlowicz-Reilly A."/>
            <person name="Shah N."/>
            <person name="Swearengen-Shahid S."/>
            <person name="Snider J."/>
            <person name="Strong J.T."/>
            <person name="Thompson J."/>
            <person name="Yoakum M."/>
            <person name="Leonard S."/>
            <person name="Pearman C."/>
            <person name="Trani L."/>
            <person name="Radionenko M."/>
            <person name="Waligorski J.E."/>
            <person name="Wang C."/>
            <person name="Rock S.M."/>
            <person name="Tin-Wollam A.-M."/>
            <person name="Maupin R."/>
            <person name="Latreille P."/>
            <person name="Wendl M.C."/>
            <person name="Yang S.-P."/>
            <person name="Pohl C."/>
            <person name="Wallis J.W."/>
            <person name="Spieth J."/>
            <person name="Bieri T.A."/>
            <person name="Berkowicz N."/>
            <person name="Nelson J.O."/>
            <person name="Osborne J."/>
            <person name="Ding L."/>
            <person name="Meyer R."/>
            <person name="Sabo A."/>
            <person name="Shotland Y."/>
            <person name="Sinha P."/>
            <person name="Wohldmann P.E."/>
            <person name="Cook L.L."/>
            <person name="Hickenbotham M.T."/>
            <person name="Eldred J."/>
            <person name="Williams D."/>
            <person name="Jones T.A."/>
            <person name="She X."/>
            <person name="Ciccarelli F.D."/>
            <person name="Izaurralde E."/>
            <person name="Taylor J."/>
            <person name="Schmutz J."/>
            <person name="Myers R.M."/>
            <person name="Cox D.R."/>
            <person name="Huang X."/>
            <person name="McPherson J.D."/>
            <person name="Mardis E.R."/>
            <person name="Clifton S.W."/>
            <person name="Warren W.C."/>
            <person name="Chinwalla A.T."/>
            <person name="Eddy S.R."/>
            <person name="Marra M.A."/>
            <person name="Ovcharenko I."/>
            <person name="Furey T.S."/>
            <person name="Miller W."/>
            <person name="Eichler E.E."/>
            <person name="Bork P."/>
            <person name="Suyama M."/>
            <person name="Torrents D."/>
            <person name="Waterston R.H."/>
            <person name="Wilson R.K."/>
        </authorList>
    </citation>
    <scope>NUCLEOTIDE SEQUENCE [LARGE SCALE GENOMIC DNA]</scope>
</reference>
<reference key="2">
    <citation type="submission" date="2004-07" db="EMBL/GenBank/DDBJ databases">
        <title>Full-length cDNA libraries and normalization.</title>
        <authorList>
            <person name="Li W.B."/>
            <person name="Gruber C."/>
            <person name="Jessee J."/>
            <person name="Polayes D."/>
        </authorList>
    </citation>
    <scope>NUCLEOTIDE SEQUENCE [LARGE SCALE MRNA]</scope>
    <source>
        <tissue>Cervix carcinoma</tissue>
    </source>
</reference>
<reference key="3">
    <citation type="journal article" date="2004" name="Nat. Genet.">
        <title>Complete sequencing and characterization of 21,243 full-length human cDNAs.</title>
        <authorList>
            <person name="Ota T."/>
            <person name="Suzuki Y."/>
            <person name="Nishikawa T."/>
            <person name="Otsuki T."/>
            <person name="Sugiyama T."/>
            <person name="Irie R."/>
            <person name="Wakamatsu A."/>
            <person name="Hayashi K."/>
            <person name="Sato H."/>
            <person name="Nagai K."/>
            <person name="Kimura K."/>
            <person name="Makita H."/>
            <person name="Sekine M."/>
            <person name="Obayashi M."/>
            <person name="Nishi T."/>
            <person name="Shibahara T."/>
            <person name="Tanaka T."/>
            <person name="Ishii S."/>
            <person name="Yamamoto J."/>
            <person name="Saito K."/>
            <person name="Kawai Y."/>
            <person name="Isono Y."/>
            <person name="Nakamura Y."/>
            <person name="Nagahari K."/>
            <person name="Murakami K."/>
            <person name="Yasuda T."/>
            <person name="Iwayanagi T."/>
            <person name="Wagatsuma M."/>
            <person name="Shiratori A."/>
            <person name="Sudo H."/>
            <person name="Hosoiri T."/>
            <person name="Kaku Y."/>
            <person name="Kodaira H."/>
            <person name="Kondo H."/>
            <person name="Sugawara M."/>
            <person name="Takahashi M."/>
            <person name="Kanda K."/>
            <person name="Yokoi T."/>
            <person name="Furuya T."/>
            <person name="Kikkawa E."/>
            <person name="Omura Y."/>
            <person name="Abe K."/>
            <person name="Kamihara K."/>
            <person name="Katsuta N."/>
            <person name="Sato K."/>
            <person name="Tanikawa M."/>
            <person name="Yamazaki M."/>
            <person name="Ninomiya K."/>
            <person name="Ishibashi T."/>
            <person name="Yamashita H."/>
            <person name="Murakawa K."/>
            <person name="Fujimori K."/>
            <person name="Tanai H."/>
            <person name="Kimata M."/>
            <person name="Watanabe M."/>
            <person name="Hiraoka S."/>
            <person name="Chiba Y."/>
            <person name="Ishida S."/>
            <person name="Ono Y."/>
            <person name="Takiguchi S."/>
            <person name="Watanabe S."/>
            <person name="Yosida M."/>
            <person name="Hotuta T."/>
            <person name="Kusano J."/>
            <person name="Kanehori K."/>
            <person name="Takahashi-Fujii A."/>
            <person name="Hara H."/>
            <person name="Tanase T.-O."/>
            <person name="Nomura Y."/>
            <person name="Togiya S."/>
            <person name="Komai F."/>
            <person name="Hara R."/>
            <person name="Takeuchi K."/>
            <person name="Arita M."/>
            <person name="Imose N."/>
            <person name="Musashino K."/>
            <person name="Yuuki H."/>
            <person name="Oshima A."/>
            <person name="Sasaki N."/>
            <person name="Aotsuka S."/>
            <person name="Yoshikawa Y."/>
            <person name="Matsunawa H."/>
            <person name="Ichihara T."/>
            <person name="Shiohata N."/>
            <person name="Sano S."/>
            <person name="Moriya S."/>
            <person name="Momiyama H."/>
            <person name="Satoh N."/>
            <person name="Takami S."/>
            <person name="Terashima Y."/>
            <person name="Suzuki O."/>
            <person name="Nakagawa S."/>
            <person name="Senoh A."/>
            <person name="Mizoguchi H."/>
            <person name="Goto Y."/>
            <person name="Shimizu F."/>
            <person name="Wakebe H."/>
            <person name="Hishigaki H."/>
            <person name="Watanabe T."/>
            <person name="Sugiyama A."/>
            <person name="Takemoto M."/>
            <person name="Kawakami B."/>
            <person name="Yamazaki M."/>
            <person name="Watanabe K."/>
            <person name="Kumagai A."/>
            <person name="Itakura S."/>
            <person name="Fukuzumi Y."/>
            <person name="Fujimori Y."/>
            <person name="Komiyama M."/>
            <person name="Tashiro H."/>
            <person name="Tanigami A."/>
            <person name="Fujiwara T."/>
            <person name="Ono T."/>
            <person name="Yamada K."/>
            <person name="Fujii Y."/>
            <person name="Ozaki K."/>
            <person name="Hirao M."/>
            <person name="Ohmori Y."/>
            <person name="Kawabata A."/>
            <person name="Hikiji T."/>
            <person name="Kobatake N."/>
            <person name="Inagaki H."/>
            <person name="Ikema Y."/>
            <person name="Okamoto S."/>
            <person name="Okitani R."/>
            <person name="Kawakami T."/>
            <person name="Noguchi S."/>
            <person name="Itoh T."/>
            <person name="Shigeta K."/>
            <person name="Senba T."/>
            <person name="Matsumura K."/>
            <person name="Nakajima Y."/>
            <person name="Mizuno T."/>
            <person name="Morinaga M."/>
            <person name="Sasaki M."/>
            <person name="Togashi T."/>
            <person name="Oyama M."/>
            <person name="Hata H."/>
            <person name="Watanabe M."/>
            <person name="Komatsu T."/>
            <person name="Mizushima-Sugano J."/>
            <person name="Satoh T."/>
            <person name="Shirai Y."/>
            <person name="Takahashi Y."/>
            <person name="Nakagawa K."/>
            <person name="Okumura K."/>
            <person name="Nagase T."/>
            <person name="Nomura N."/>
            <person name="Kikuchi H."/>
            <person name="Masuho Y."/>
            <person name="Yamashita R."/>
            <person name="Nakai K."/>
            <person name="Yada T."/>
            <person name="Nakamura Y."/>
            <person name="Ohara O."/>
            <person name="Isogai T."/>
            <person name="Sugano S."/>
        </authorList>
    </citation>
    <scope>NUCLEOTIDE SEQUENCE [LARGE SCALE MRNA]</scope>
    <source>
        <tissue>Testis</tissue>
    </source>
</reference>
<reference key="4">
    <citation type="submission" date="2005-07" db="EMBL/GenBank/DDBJ databases">
        <authorList>
            <person name="Mural R.J."/>
            <person name="Istrail S."/>
            <person name="Sutton G.G."/>
            <person name="Florea L."/>
            <person name="Halpern A.L."/>
            <person name="Mobarry C.M."/>
            <person name="Lippert R."/>
            <person name="Walenz B."/>
            <person name="Shatkay H."/>
            <person name="Dew I."/>
            <person name="Miller J.R."/>
            <person name="Flanigan M.J."/>
            <person name="Edwards N.J."/>
            <person name="Bolanos R."/>
            <person name="Fasulo D."/>
            <person name="Halldorsson B.V."/>
            <person name="Hannenhalli S."/>
            <person name="Turner R."/>
            <person name="Yooseph S."/>
            <person name="Lu F."/>
            <person name="Nusskern D.R."/>
            <person name="Shue B.C."/>
            <person name="Zheng X.H."/>
            <person name="Zhong F."/>
            <person name="Delcher A.L."/>
            <person name="Huson D.H."/>
            <person name="Kravitz S.A."/>
            <person name="Mouchard L."/>
            <person name="Reinert K."/>
            <person name="Remington K.A."/>
            <person name="Clark A.G."/>
            <person name="Waterman M.S."/>
            <person name="Eichler E.E."/>
            <person name="Adams M.D."/>
            <person name="Hunkapiller M.W."/>
            <person name="Myers E.W."/>
            <person name="Venter J.C."/>
        </authorList>
    </citation>
    <scope>NUCLEOTIDE SEQUENCE [LARGE SCALE GENOMIC DNA]</scope>
</reference>
<evidence type="ECO:0000250" key="1">
    <source>
        <dbReference type="UniProtKB" id="Q8N5Y2"/>
    </source>
</evidence>
<evidence type="ECO:0000255" key="2">
    <source>
        <dbReference type="PROSITE-ProRule" id="PRU00972"/>
    </source>
</evidence>
<evidence type="ECO:0000256" key="3">
    <source>
        <dbReference type="SAM" id="MobiDB-lite"/>
    </source>
</evidence>
<evidence type="ECO:0000312" key="4">
    <source>
        <dbReference type="HGNC" id="HGNC:17837"/>
    </source>
</evidence>
<sequence>MEERTVTLEIPEVLKRQLEDDCYYINRRKRLVQLPCHTNIITILESYVKHFAISAAFSANERPRHHHAMPHASMNVPYIPAEKNIDLCKEMVDGLRITFDYTLPLVLLYPYEQAQYKKVTASKVFLAIKESATNTNRSQEKLSPSLRLLNPSRPQSTESQSTSGEPATPKRRKAEPQAVQSLRRSSPHTANCDRLSKSSTSPQPKRWQQDMSTSVPKLFLHLEKKTPVHSRSSSPTLTPSQEGSPVFAGFEGRRTNEINEVLSWKLVPDNYPPGDQPPPPSYIYGAQHLLRLFVKLPEILGKMSFTEKNLKALLKHFDLFVRFLAEYHDDFFPESAYVAASEVHYSTRNPQAVNKC</sequence>
<feature type="chain" id="PRO_0000348253" description="MSL complex subunit 3B">
    <location>
        <begin position="1"/>
        <end position="356"/>
    </location>
</feature>
<feature type="domain" description="MRG" evidence="2">
    <location>
        <begin position="2"/>
        <end position="350"/>
    </location>
</feature>
<feature type="region of interest" description="Disordered" evidence="3">
    <location>
        <begin position="135"/>
        <end position="210"/>
    </location>
</feature>
<feature type="region of interest" description="Disordered" evidence="3">
    <location>
        <begin position="225"/>
        <end position="247"/>
    </location>
</feature>
<feature type="compositionally biased region" description="Low complexity" evidence="3">
    <location>
        <begin position="142"/>
        <end position="156"/>
    </location>
</feature>
<feature type="compositionally biased region" description="Polar residues" evidence="3">
    <location>
        <begin position="178"/>
        <end position="189"/>
    </location>
</feature>
<feature type="compositionally biased region" description="Polar residues" evidence="3">
    <location>
        <begin position="229"/>
        <end position="243"/>
    </location>
</feature>
<protein>
    <recommendedName>
        <fullName evidence="4">MSL complex subunit 3B</fullName>
    </recommendedName>
    <alternativeName>
        <fullName>Male-specific lethal-3 homolog 2</fullName>
    </alternativeName>
    <alternativeName>
        <fullName>Male-specific lethal-3 homolog pseudogene 1</fullName>
    </alternativeName>
    <alternativeName>
        <fullName>Male-specific lethal-3 protein-like 2</fullName>
        <shortName>MSL3-like 2</shortName>
    </alternativeName>
</protein>
<dbReference type="EMBL" id="AK301707">
    <property type="protein sequence ID" value="BAG63179.1"/>
    <property type="molecule type" value="mRNA"/>
</dbReference>
<dbReference type="EMBL" id="AK316372">
    <property type="protein sequence ID" value="BAH14743.1"/>
    <property type="molecule type" value="mRNA"/>
</dbReference>
<dbReference type="EMBL" id="AC005538">
    <property type="status" value="NOT_ANNOTATED_CDS"/>
    <property type="molecule type" value="Genomic_DNA"/>
</dbReference>
<dbReference type="EMBL" id="CR623684">
    <property type="status" value="NOT_ANNOTATED_CDS"/>
    <property type="molecule type" value="mRNA"/>
</dbReference>
<dbReference type="EMBL" id="CH471063">
    <property type="protein sequence ID" value="EAW71066.1"/>
    <property type="molecule type" value="Genomic_DNA"/>
</dbReference>
<dbReference type="RefSeq" id="NP_001412262.1">
    <property type="nucleotide sequence ID" value="NM_001425333.1"/>
</dbReference>
<dbReference type="SMR" id="P0C860"/>
<dbReference type="FunCoup" id="P0C860">
    <property type="interactions" value="26"/>
</dbReference>
<dbReference type="IntAct" id="P0C860">
    <property type="interactions" value="4"/>
</dbReference>
<dbReference type="iPTMnet" id="P0C860"/>
<dbReference type="PhosphoSitePlus" id="P0C860"/>
<dbReference type="BioMuta" id="HGNC:17837"/>
<dbReference type="DMDM" id="205829193"/>
<dbReference type="jPOST" id="P0C860"/>
<dbReference type="MassIVE" id="P0C860"/>
<dbReference type="PeptideAtlas" id="P0C860"/>
<dbReference type="ProteomicsDB" id="52398"/>
<dbReference type="Pumba" id="P0C860"/>
<dbReference type="Ensembl" id="ENST00000438684.2">
    <property type="protein sequence ID" value="ENSP00000520632.1"/>
    <property type="gene ID" value="ENSG00000293137.2"/>
</dbReference>
<dbReference type="GeneID" id="151507"/>
<dbReference type="MANE-Select" id="ENST00000438684.2">
    <property type="protein sequence ID" value="ENSP00000520632.1"/>
    <property type="RefSeq nucleotide sequence ID" value="NM_001425333.1"/>
    <property type="RefSeq protein sequence ID" value="NP_001412262.1"/>
</dbReference>
<dbReference type="AGR" id="HGNC:17837"/>
<dbReference type="GeneCards" id="MSL3B"/>
<dbReference type="HGNC" id="HGNC:17837">
    <property type="gene designation" value="MSL3B"/>
</dbReference>
<dbReference type="neXtProt" id="NX_P0C860"/>
<dbReference type="GeneTree" id="ENSGT00950000182965"/>
<dbReference type="InParanoid" id="P0C860"/>
<dbReference type="PAN-GO" id="P0C860">
    <property type="GO annotations" value="5 GO annotations based on evolutionary models"/>
</dbReference>
<dbReference type="PhylomeDB" id="P0C860"/>
<dbReference type="PathwayCommons" id="P0C860"/>
<dbReference type="Pharos" id="P0C860">
    <property type="development level" value="Tdark"/>
</dbReference>
<dbReference type="Proteomes" id="UP000005640">
    <property type="component" value="Unplaced"/>
</dbReference>
<dbReference type="RNAct" id="P0C860">
    <property type="molecule type" value="protein"/>
</dbReference>
<dbReference type="GO" id="GO:0072487">
    <property type="term" value="C:MSL complex"/>
    <property type="evidence" value="ECO:0000318"/>
    <property type="project" value="GO_Central"/>
</dbReference>
<dbReference type="GO" id="GO:0035267">
    <property type="term" value="C:NuA4 histone acetyltransferase complex"/>
    <property type="evidence" value="ECO:0000318"/>
    <property type="project" value="GO_Central"/>
</dbReference>
<dbReference type="GO" id="GO:0005634">
    <property type="term" value="C:nucleus"/>
    <property type="evidence" value="ECO:0007669"/>
    <property type="project" value="UniProtKB-SubCell"/>
</dbReference>
<dbReference type="GO" id="GO:0006325">
    <property type="term" value="P:chromatin organization"/>
    <property type="evidence" value="ECO:0007669"/>
    <property type="project" value="UniProtKB-KW"/>
</dbReference>
<dbReference type="GO" id="GO:0006355">
    <property type="term" value="P:regulation of DNA-templated transcription"/>
    <property type="evidence" value="ECO:0007669"/>
    <property type="project" value="InterPro"/>
</dbReference>
<dbReference type="FunFam" id="1.10.274.30:FF:000003">
    <property type="entry name" value="Male-specific lethal 3 homolog"/>
    <property type="match status" value="1"/>
</dbReference>
<dbReference type="FunFam" id="1.10.274.30:FF:000002">
    <property type="entry name" value="male-specific lethal 3 homolog"/>
    <property type="match status" value="1"/>
</dbReference>
<dbReference type="Gene3D" id="1.10.274.30">
    <property type="entry name" value="MRG domain"/>
    <property type="match status" value="2"/>
</dbReference>
<dbReference type="InterPro" id="IPR008676">
    <property type="entry name" value="MRG"/>
</dbReference>
<dbReference type="InterPro" id="IPR038217">
    <property type="entry name" value="MRG_C_sf"/>
</dbReference>
<dbReference type="InterPro" id="IPR026541">
    <property type="entry name" value="MRG_dom"/>
</dbReference>
<dbReference type="PANTHER" id="PTHR10880:SF37">
    <property type="entry name" value="MALE-SPECIFIC LETHAL-3 PROTEIN-LIKE 2-RELATED"/>
    <property type="match status" value="1"/>
</dbReference>
<dbReference type="PANTHER" id="PTHR10880">
    <property type="entry name" value="MORTALITY FACTOR 4-LIKE PROTEIN"/>
    <property type="match status" value="1"/>
</dbReference>
<dbReference type="Pfam" id="PF05712">
    <property type="entry name" value="MRG"/>
    <property type="match status" value="1"/>
</dbReference>
<dbReference type="PROSITE" id="PS51640">
    <property type="entry name" value="MRG"/>
    <property type="match status" value="1"/>
</dbReference>
<keyword id="KW-0156">Chromatin regulator</keyword>
<keyword id="KW-0539">Nucleus</keyword>
<keyword id="KW-1267">Proteomics identification</keyword>
<keyword id="KW-1185">Reference proteome</keyword>
<keyword id="KW-0804">Transcription</keyword>
<keyword id="KW-0805">Transcription regulation</keyword>
<gene>
    <name evidence="4" type="primary">MSL3B</name>
    <name type="synonym">MSL3L2</name>
    <name type="synonym">MSL3P1</name>
</gene>
<organism>
    <name type="scientific">Homo sapiens</name>
    <name type="common">Human</name>
    <dbReference type="NCBI Taxonomy" id="9606"/>
    <lineage>
        <taxon>Eukaryota</taxon>
        <taxon>Metazoa</taxon>
        <taxon>Chordata</taxon>
        <taxon>Craniata</taxon>
        <taxon>Vertebrata</taxon>
        <taxon>Euteleostomi</taxon>
        <taxon>Mammalia</taxon>
        <taxon>Eutheria</taxon>
        <taxon>Euarchontoglires</taxon>
        <taxon>Primates</taxon>
        <taxon>Haplorrhini</taxon>
        <taxon>Catarrhini</taxon>
        <taxon>Hominidae</taxon>
        <taxon>Homo</taxon>
    </lineage>
</organism>